<organism>
    <name type="scientific">Lymnaea stagnalis</name>
    <name type="common">Great pond snail</name>
    <name type="synonym">Helix stagnalis</name>
    <dbReference type="NCBI Taxonomy" id="6523"/>
    <lineage>
        <taxon>Eukaryota</taxon>
        <taxon>Metazoa</taxon>
        <taxon>Spiralia</taxon>
        <taxon>Lophotrochozoa</taxon>
        <taxon>Mollusca</taxon>
        <taxon>Gastropoda</taxon>
        <taxon>Heterobranchia</taxon>
        <taxon>Euthyneura</taxon>
        <taxon>Panpulmonata</taxon>
        <taxon>Hygrophila</taxon>
        <taxon>Lymnaeoidea</taxon>
        <taxon>Lymnaeidae</taxon>
        <taxon>Lymnaea</taxon>
    </lineage>
</organism>
<proteinExistence type="evidence at protein level"/>
<evidence type="ECO:0000250" key="1"/>
<evidence type="ECO:0000255" key="2">
    <source>
        <dbReference type="PROSITE-ProRule" id="PRU00085"/>
    </source>
</evidence>
<evidence type="ECO:0000269" key="3">
    <source>
    </source>
</evidence>
<evidence type="ECO:0000305" key="4"/>
<protein>
    <recommendedName>
        <fullName>Yolk ferritin</fullName>
        <ecNumber>1.16.3.1</ecNumber>
    </recommendedName>
</protein>
<reference key="1">
    <citation type="journal article" date="1994" name="Eur. J. Biochem.">
        <title>cDNA cloning and deduced amino acid sequence of two ferritins: soma ferritin and yolk ferritin, from the snail Lymnaea stagnalis L.</title>
        <authorList>
            <person name="von Darl M."/>
            <person name="Harrison M."/>
            <person name="Bottke W."/>
        </authorList>
    </citation>
    <scope>NUCLEOTIDE SEQUENCE [MRNA]</scope>
    <scope>PROTEIN SEQUENCE OF 19-38</scope>
    <source>
        <tissue>Midgut</tissue>
    </source>
</reference>
<feature type="signal peptide" evidence="3">
    <location>
        <begin position="1"/>
        <end position="18"/>
    </location>
</feature>
<feature type="chain" id="PRO_0000008852" description="Yolk ferritin">
    <location>
        <begin position="19"/>
        <end position="239"/>
    </location>
</feature>
<feature type="domain" description="Ferritin-like diiron" evidence="2">
    <location>
        <begin position="27"/>
        <end position="217"/>
    </location>
</feature>
<feature type="region of interest" description="Insertion; not present in other ferritins">
    <location>
        <begin position="105"/>
        <end position="146"/>
    </location>
</feature>
<feature type="binding site" evidence="2">
    <location>
        <position position="44"/>
    </location>
    <ligand>
        <name>Fe cation</name>
        <dbReference type="ChEBI" id="CHEBI:24875"/>
        <label>1</label>
    </ligand>
</feature>
<feature type="binding site" evidence="2">
    <location>
        <position position="79"/>
    </location>
    <ligand>
        <name>Fe cation</name>
        <dbReference type="ChEBI" id="CHEBI:24875"/>
        <label>1</label>
    </ligand>
</feature>
<feature type="binding site" evidence="2">
    <location>
        <position position="79"/>
    </location>
    <ligand>
        <name>Fe cation</name>
        <dbReference type="ChEBI" id="CHEBI:24875"/>
        <label>2</label>
    </ligand>
</feature>
<feature type="binding site" evidence="2">
    <location>
        <position position="165"/>
    </location>
    <ligand>
        <name>Fe cation</name>
        <dbReference type="ChEBI" id="CHEBI:24875"/>
        <label>2</label>
    </ligand>
</feature>
<feature type="binding site" evidence="2">
    <location>
        <position position="199"/>
    </location>
    <ligand>
        <name>Fe cation</name>
        <dbReference type="ChEBI" id="CHEBI:24875"/>
        <label>2</label>
    </ligand>
</feature>
<accession>P42578</accession>
<keyword id="KW-0903">Direct protein sequencing</keyword>
<keyword id="KW-0408">Iron</keyword>
<keyword id="KW-0409">Iron storage</keyword>
<keyword id="KW-0479">Metal-binding</keyword>
<keyword id="KW-0560">Oxidoreductase</keyword>
<keyword id="KW-0964">Secreted</keyword>
<keyword id="KW-0732">Signal</keyword>
<sequence>MNSVLFLTLAVCSSLAYGKEFVATVRQNYKENINQLLEQQIQKELAASYIYQAYASYFQRADVSLPGIKKFFSDASSEERDDAQSLIDYINQRGGHVQYDKIDLKDACETVMKFVTSDTSGLEEFRDRRMCICGFVATKTINDNCGERSDWKEGLIAFEDTLAIERYVNAQLLDIHKKADDEKDAHLTHILEHEFLEEQVSSINKIAHAITRLRSFEQGSGNNYKLGRVYLRPTPQISH</sequence>
<comment type="function">
    <text evidence="1">Stores iron in a soluble, non-toxic, readily available form. Important for iron homeostasis. Has ferroxidase activity. Iron is taken up in the ferrous form and deposited as ferric hydroxides after oxidation (By similarity).</text>
</comment>
<comment type="catalytic activity">
    <reaction>
        <text>4 Fe(2+) + O2 + 4 H(+) = 4 Fe(3+) + 2 H2O</text>
        <dbReference type="Rhea" id="RHEA:11148"/>
        <dbReference type="ChEBI" id="CHEBI:15377"/>
        <dbReference type="ChEBI" id="CHEBI:15378"/>
        <dbReference type="ChEBI" id="CHEBI:15379"/>
        <dbReference type="ChEBI" id="CHEBI:29033"/>
        <dbReference type="ChEBI" id="CHEBI:29034"/>
        <dbReference type="EC" id="1.16.3.1"/>
    </reaction>
</comment>
<comment type="subunit">
    <text evidence="1">Oligomer of 12 or 24 subunits. The functional molecule is roughly spherical and contains a central cavity into which the polymeric ferric iron core is deposited (By similarity).</text>
</comment>
<comment type="subcellular location">
    <subcellularLocation>
        <location>Secreted</location>
    </subcellularLocation>
</comment>
<comment type="tissue specificity">
    <text>Midgut gland and bloodstream.</text>
</comment>
<comment type="developmental stage">
    <text>First detected during pregastrulation stage, levels increase up to the hatching stage, and is still present at the late veliger stage.</text>
</comment>
<comment type="domain">
    <text>Contains an 'insertion' sequence of 42 residues which is not present in other ferritins.</text>
</comment>
<comment type="similarity">
    <text evidence="4">Belongs to the ferritin family.</text>
</comment>
<dbReference type="EC" id="1.16.3.1"/>
<dbReference type="EMBL" id="X56779">
    <property type="protein sequence ID" value="CAA40097.1"/>
    <property type="molecule type" value="mRNA"/>
</dbReference>
<dbReference type="PIR" id="S45604">
    <property type="entry name" value="S45604"/>
</dbReference>
<dbReference type="SMR" id="P42578"/>
<dbReference type="GO" id="GO:0005737">
    <property type="term" value="C:cytoplasm"/>
    <property type="evidence" value="ECO:0007669"/>
    <property type="project" value="TreeGrafter"/>
</dbReference>
<dbReference type="GO" id="GO:0005576">
    <property type="term" value="C:extracellular region"/>
    <property type="evidence" value="ECO:0007669"/>
    <property type="project" value="UniProtKB-SubCell"/>
</dbReference>
<dbReference type="GO" id="GO:0008199">
    <property type="term" value="F:ferric iron binding"/>
    <property type="evidence" value="ECO:0007669"/>
    <property type="project" value="InterPro"/>
</dbReference>
<dbReference type="GO" id="GO:0008198">
    <property type="term" value="F:ferrous iron binding"/>
    <property type="evidence" value="ECO:0007669"/>
    <property type="project" value="TreeGrafter"/>
</dbReference>
<dbReference type="GO" id="GO:0004322">
    <property type="term" value="F:ferroxidase activity"/>
    <property type="evidence" value="ECO:0007669"/>
    <property type="project" value="UniProtKB-EC"/>
</dbReference>
<dbReference type="GO" id="GO:0006879">
    <property type="term" value="P:intracellular iron ion homeostasis"/>
    <property type="evidence" value="ECO:0007669"/>
    <property type="project" value="UniProtKB-KW"/>
</dbReference>
<dbReference type="GO" id="GO:0006826">
    <property type="term" value="P:iron ion transport"/>
    <property type="evidence" value="ECO:0007669"/>
    <property type="project" value="InterPro"/>
</dbReference>
<dbReference type="CDD" id="cd01056">
    <property type="entry name" value="Euk_Ferritin"/>
    <property type="match status" value="1"/>
</dbReference>
<dbReference type="Gene3D" id="1.20.1260.10">
    <property type="match status" value="1"/>
</dbReference>
<dbReference type="InterPro" id="IPR001519">
    <property type="entry name" value="Ferritin"/>
</dbReference>
<dbReference type="InterPro" id="IPR012347">
    <property type="entry name" value="Ferritin-like"/>
</dbReference>
<dbReference type="InterPro" id="IPR009040">
    <property type="entry name" value="Ferritin-like_diiron"/>
</dbReference>
<dbReference type="InterPro" id="IPR009078">
    <property type="entry name" value="Ferritin-like_SF"/>
</dbReference>
<dbReference type="InterPro" id="IPR014034">
    <property type="entry name" value="Ferritin_CS"/>
</dbReference>
<dbReference type="InterPro" id="IPR008331">
    <property type="entry name" value="Ferritin_DPS_dom"/>
</dbReference>
<dbReference type="PANTHER" id="PTHR11431">
    <property type="entry name" value="FERRITIN"/>
    <property type="match status" value="1"/>
</dbReference>
<dbReference type="PANTHER" id="PTHR11431:SF75">
    <property type="entry name" value="FERRITIN"/>
    <property type="match status" value="1"/>
</dbReference>
<dbReference type="Pfam" id="PF00210">
    <property type="entry name" value="Ferritin"/>
    <property type="match status" value="2"/>
</dbReference>
<dbReference type="SUPFAM" id="SSF47240">
    <property type="entry name" value="Ferritin-like"/>
    <property type="match status" value="1"/>
</dbReference>
<dbReference type="PROSITE" id="PS00204">
    <property type="entry name" value="FERRITIN_2"/>
    <property type="match status" value="1"/>
</dbReference>
<dbReference type="PROSITE" id="PS50905">
    <property type="entry name" value="FERRITIN_LIKE"/>
    <property type="match status" value="1"/>
</dbReference>
<name>FRIY_LYMST</name>